<accession>P0C0A3</accession>
<dbReference type="EMBL" id="BI157958">
    <property type="status" value="NOT_ANNOTATED_CDS"/>
    <property type="molecule type" value="mRNA"/>
</dbReference>
<dbReference type="CCDS" id="CCDS36385.1"/>
<dbReference type="RefSeq" id="NP_001078967.1">
    <property type="nucleotide sequence ID" value="NM_001085498.2"/>
</dbReference>
<dbReference type="SMR" id="P0C0A3"/>
<dbReference type="BioGRID" id="228946">
    <property type="interactions" value="18"/>
</dbReference>
<dbReference type="ComplexPortal" id="CPX-332">
    <property type="entry name" value="ESCRT-III complex, variant Chmp1b1"/>
</dbReference>
<dbReference type="ComplexPortal" id="CPX-333">
    <property type="entry name" value="ESCRT-III complex, variant Chmp1b2"/>
</dbReference>
<dbReference type="FunCoup" id="P0C0A3">
    <property type="interactions" value="1866"/>
</dbReference>
<dbReference type="IntAct" id="P0C0A3">
    <property type="interactions" value="18"/>
</dbReference>
<dbReference type="STRING" id="10090.ENSMUSP00000026434"/>
<dbReference type="iPTMnet" id="P0C0A3"/>
<dbReference type="PhosphoSitePlus" id="P0C0A3"/>
<dbReference type="PaxDb" id="10090-ENSMUSP00000026434"/>
<dbReference type="ProteomicsDB" id="281618"/>
<dbReference type="Pumba" id="P0C0A3"/>
<dbReference type="Antibodypedia" id="19789">
    <property type="antibodies" value="156 antibodies from 24 providers"/>
</dbReference>
<dbReference type="Ensembl" id="ENSMUST00000026434.13">
    <property type="protein sequence ID" value="ENSMUSP00000026434.7"/>
    <property type="gene ID" value="ENSMUSG00000025371.13"/>
</dbReference>
<dbReference type="GeneID" id="208092"/>
<dbReference type="KEGG" id="mmu:208092"/>
<dbReference type="UCSC" id="uc007mrd.2">
    <property type="organism name" value="mouse"/>
</dbReference>
<dbReference type="AGR" id="MGI:3583942"/>
<dbReference type="CTD" id="79643"/>
<dbReference type="MGI" id="MGI:3583942">
    <property type="gene designation" value="Chmp6"/>
</dbReference>
<dbReference type="VEuPathDB" id="HostDB:ENSMUSG00000025371"/>
<dbReference type="eggNOG" id="KOG2910">
    <property type="taxonomic scope" value="Eukaryota"/>
</dbReference>
<dbReference type="GeneTree" id="ENSGT00720000108863"/>
<dbReference type="HOGENOM" id="CLU_086201_3_0_1"/>
<dbReference type="InParanoid" id="P0C0A3"/>
<dbReference type="OMA" id="RAKQPAM"/>
<dbReference type="OrthoDB" id="441172at2759"/>
<dbReference type="PhylomeDB" id="P0C0A3"/>
<dbReference type="TreeFam" id="TF105929"/>
<dbReference type="Reactome" id="R-MMU-1632852">
    <property type="pathway name" value="Macroautophagy"/>
</dbReference>
<dbReference type="Reactome" id="R-MMU-5620971">
    <property type="pathway name" value="Pyroptosis"/>
</dbReference>
<dbReference type="Reactome" id="R-MMU-917729">
    <property type="pathway name" value="Endosomal Sorting Complex Required For Transport (ESCRT)"/>
</dbReference>
<dbReference type="Reactome" id="R-MMU-9668328">
    <property type="pathway name" value="Sealing of the nuclear envelope (NE) by ESCRT-III"/>
</dbReference>
<dbReference type="BioGRID-ORCS" id="208092">
    <property type="hits" value="32 hits in 79 CRISPR screens"/>
</dbReference>
<dbReference type="CD-CODE" id="CE726F99">
    <property type="entry name" value="Postsynaptic density"/>
</dbReference>
<dbReference type="PRO" id="PR:P0C0A3"/>
<dbReference type="Proteomes" id="UP000000589">
    <property type="component" value="Chromosome 11"/>
</dbReference>
<dbReference type="RNAct" id="P0C0A3">
    <property type="molecule type" value="protein"/>
</dbReference>
<dbReference type="Bgee" id="ENSMUSG00000025371">
    <property type="expression patterns" value="Expressed in right kidney and 222 other cell types or tissues"/>
</dbReference>
<dbReference type="ExpressionAtlas" id="P0C0A3">
    <property type="expression patterns" value="baseline and differential"/>
</dbReference>
<dbReference type="GO" id="GO:1904930">
    <property type="term" value="C:amphisome membrane"/>
    <property type="evidence" value="ECO:0000266"/>
    <property type="project" value="ComplexPortal"/>
</dbReference>
<dbReference type="GO" id="GO:0000421">
    <property type="term" value="C:autophagosome membrane"/>
    <property type="evidence" value="ECO:0000266"/>
    <property type="project" value="ComplexPortal"/>
</dbReference>
<dbReference type="GO" id="GO:0000815">
    <property type="term" value="C:ESCRT III complex"/>
    <property type="evidence" value="ECO:0007669"/>
    <property type="project" value="Ensembl"/>
</dbReference>
<dbReference type="GO" id="GO:0000776">
    <property type="term" value="C:kinetochore"/>
    <property type="evidence" value="ECO:0000266"/>
    <property type="project" value="ComplexPortal"/>
</dbReference>
<dbReference type="GO" id="GO:0005828">
    <property type="term" value="C:kinetochore microtubule"/>
    <property type="evidence" value="ECO:0000266"/>
    <property type="project" value="ComplexPortal"/>
</dbReference>
<dbReference type="GO" id="GO:0005765">
    <property type="term" value="C:lysosomal membrane"/>
    <property type="evidence" value="ECO:0000266"/>
    <property type="project" value="ComplexPortal"/>
</dbReference>
<dbReference type="GO" id="GO:0030496">
    <property type="term" value="C:midbody"/>
    <property type="evidence" value="ECO:0000266"/>
    <property type="project" value="ComplexPortal"/>
</dbReference>
<dbReference type="GO" id="GO:0032585">
    <property type="term" value="C:multivesicular body membrane"/>
    <property type="evidence" value="ECO:0000266"/>
    <property type="project" value="ComplexPortal"/>
</dbReference>
<dbReference type="GO" id="GO:0005643">
    <property type="term" value="C:nuclear pore"/>
    <property type="evidence" value="ECO:0000266"/>
    <property type="project" value="ComplexPortal"/>
</dbReference>
<dbReference type="GO" id="GO:0005886">
    <property type="term" value="C:plasma membrane"/>
    <property type="evidence" value="ECO:0000266"/>
    <property type="project" value="ComplexPortal"/>
</dbReference>
<dbReference type="GO" id="GO:0044877">
    <property type="term" value="F:protein-containing complex binding"/>
    <property type="evidence" value="ECO:0007669"/>
    <property type="project" value="Ensembl"/>
</dbReference>
<dbReference type="GO" id="GO:0097352">
    <property type="term" value="P:autophagosome maturation"/>
    <property type="evidence" value="ECO:0000266"/>
    <property type="project" value="ComplexPortal"/>
</dbReference>
<dbReference type="GO" id="GO:0006914">
    <property type="term" value="P:autophagy"/>
    <property type="evidence" value="ECO:0000266"/>
    <property type="project" value="ComplexPortal"/>
</dbReference>
<dbReference type="GO" id="GO:1902774">
    <property type="term" value="P:late endosome to lysosome transport"/>
    <property type="evidence" value="ECO:0000266"/>
    <property type="project" value="ComplexPortal"/>
</dbReference>
<dbReference type="GO" id="GO:0090148">
    <property type="term" value="P:membrane fission"/>
    <property type="evidence" value="ECO:0000303"/>
    <property type="project" value="ComplexPortal"/>
</dbReference>
<dbReference type="GO" id="GO:0061952">
    <property type="term" value="P:midbody abscission"/>
    <property type="evidence" value="ECO:0000266"/>
    <property type="project" value="ComplexPortal"/>
</dbReference>
<dbReference type="GO" id="GO:0007080">
    <property type="term" value="P:mitotic metaphase chromosome alignment"/>
    <property type="evidence" value="ECO:0000266"/>
    <property type="project" value="ComplexPortal"/>
</dbReference>
<dbReference type="GO" id="GO:0036258">
    <property type="term" value="P:multivesicular body assembly"/>
    <property type="evidence" value="ECO:0000303"/>
    <property type="project" value="ComplexPortal"/>
</dbReference>
<dbReference type="GO" id="GO:0071985">
    <property type="term" value="P:multivesicular body sorting pathway"/>
    <property type="evidence" value="ECO:0000266"/>
    <property type="project" value="ComplexPortal"/>
</dbReference>
<dbReference type="GO" id="GO:0061763">
    <property type="term" value="P:multivesicular body-lysosome fusion"/>
    <property type="evidence" value="ECO:0000303"/>
    <property type="project" value="ComplexPortal"/>
</dbReference>
<dbReference type="GO" id="GO:0031468">
    <property type="term" value="P:nuclear membrane reassembly"/>
    <property type="evidence" value="ECO:0000266"/>
    <property type="project" value="ComplexPortal"/>
</dbReference>
<dbReference type="GO" id="GO:0006997">
    <property type="term" value="P:nucleus organization"/>
    <property type="evidence" value="ECO:0000266"/>
    <property type="project" value="ComplexPortal"/>
</dbReference>
<dbReference type="GO" id="GO:0001778">
    <property type="term" value="P:plasma membrane repair"/>
    <property type="evidence" value="ECO:0000266"/>
    <property type="project" value="ComplexPortal"/>
</dbReference>
<dbReference type="GO" id="GO:0015031">
    <property type="term" value="P:protein transport"/>
    <property type="evidence" value="ECO:0007669"/>
    <property type="project" value="UniProtKB-KW"/>
</dbReference>
<dbReference type="GO" id="GO:1901673">
    <property type="term" value="P:regulation of mitotic spindle assembly"/>
    <property type="evidence" value="ECO:0000266"/>
    <property type="project" value="ComplexPortal"/>
</dbReference>
<dbReference type="GO" id="GO:0042176">
    <property type="term" value="P:regulation of protein catabolic process"/>
    <property type="evidence" value="ECO:0007669"/>
    <property type="project" value="Ensembl"/>
</dbReference>
<dbReference type="GO" id="GO:0043162">
    <property type="term" value="P:ubiquitin-dependent protein catabolic process via the multivesicular body sorting pathway"/>
    <property type="evidence" value="ECO:0000266"/>
    <property type="project" value="ComplexPortal"/>
</dbReference>
<dbReference type="GO" id="GO:0051469">
    <property type="term" value="P:vesicle fusion with vacuole"/>
    <property type="evidence" value="ECO:0000303"/>
    <property type="project" value="ComplexPortal"/>
</dbReference>
<dbReference type="GO" id="GO:0046761">
    <property type="term" value="P:viral budding from plasma membrane"/>
    <property type="evidence" value="ECO:0000266"/>
    <property type="project" value="ComplexPortal"/>
</dbReference>
<dbReference type="GO" id="GO:0039702">
    <property type="term" value="P:viral budding via host ESCRT complex"/>
    <property type="evidence" value="ECO:0000266"/>
    <property type="project" value="ComplexPortal"/>
</dbReference>
<dbReference type="Gene3D" id="1.10.287.1060">
    <property type="entry name" value="ESAT-6-like"/>
    <property type="match status" value="1"/>
</dbReference>
<dbReference type="InterPro" id="IPR005024">
    <property type="entry name" value="Snf7_fam"/>
</dbReference>
<dbReference type="PANTHER" id="PTHR22761">
    <property type="entry name" value="CHARGED MULTIVESICULAR BODY PROTEIN"/>
    <property type="match status" value="1"/>
</dbReference>
<dbReference type="PANTHER" id="PTHR22761:SF5">
    <property type="entry name" value="CHARGED MULTIVESICULAR BODY PROTEIN 6"/>
    <property type="match status" value="1"/>
</dbReference>
<dbReference type="Pfam" id="PF03357">
    <property type="entry name" value="Snf7"/>
    <property type="match status" value="1"/>
</dbReference>
<name>CHMP6_MOUSE</name>
<keyword id="KW-0175">Coiled coil</keyword>
<keyword id="KW-0967">Endosome</keyword>
<keyword id="KW-0449">Lipoprotein</keyword>
<keyword id="KW-0472">Membrane</keyword>
<keyword id="KW-0519">Myristate</keyword>
<keyword id="KW-0597">Phosphoprotein</keyword>
<keyword id="KW-0653">Protein transport</keyword>
<keyword id="KW-1185">Reference proteome</keyword>
<keyword id="KW-0813">Transport</keyword>
<keyword id="KW-0832">Ubl conjugation</keyword>
<reference key="1">
    <citation type="submission" date="2004-04" db="EMBL/GenBank/DDBJ databases">
        <authorList>
            <consortium name="The MGC Project Team"/>
        </authorList>
    </citation>
    <scope>NUCLEOTIDE SEQUENCE [LARGE SCALE MRNA]</scope>
    <source>
        <tissue>Mammary gland</tissue>
    </source>
</reference>
<reference key="2">
    <citation type="journal article" date="2010" name="Cell">
        <title>A tissue-specific atlas of mouse protein phosphorylation and expression.</title>
        <authorList>
            <person name="Huttlin E.L."/>
            <person name="Jedrychowski M.P."/>
            <person name="Elias J.E."/>
            <person name="Goswami T."/>
            <person name="Rad R."/>
            <person name="Beausoleil S.A."/>
            <person name="Villen J."/>
            <person name="Haas W."/>
            <person name="Sowa M.E."/>
            <person name="Gygi S.P."/>
        </authorList>
    </citation>
    <scope>PHOSPHORYLATION [LARGE SCALE ANALYSIS] AT SER-119</scope>
    <scope>IDENTIFICATION BY MASS SPECTROMETRY [LARGE SCALE ANALYSIS]</scope>
    <source>
        <tissue>Brain</tissue>
        <tissue>Brown adipose tissue</tissue>
        <tissue>Heart</tissue>
        <tissue>Kidney</tissue>
        <tissue>Liver</tissue>
        <tissue>Lung</tissue>
        <tissue>Pancreas</tissue>
        <tissue>Testis</tissue>
    </source>
</reference>
<feature type="initiator methionine" description="Removed" evidence="2">
    <location>
        <position position="1"/>
    </location>
</feature>
<feature type="chain" id="PRO_0000211509" description="Charged multivesicular body protein 6">
    <location>
        <begin position="2"/>
        <end position="200"/>
    </location>
</feature>
<feature type="region of interest" description="Disordered" evidence="4">
    <location>
        <begin position="168"/>
        <end position="200"/>
    </location>
</feature>
<feature type="coiled-coil region" evidence="3">
    <location>
        <begin position="10"/>
        <end position="145"/>
    </location>
</feature>
<feature type="short sequence motif" description="Type-2 MIT-interacting motif" evidence="1">
    <location>
        <begin position="168"/>
        <end position="179"/>
    </location>
</feature>
<feature type="modified residue" description="Phosphoserine" evidence="6">
    <location>
        <position position="119"/>
    </location>
</feature>
<feature type="modified residue" description="Phosphothreonine" evidence="2">
    <location>
        <position position="130"/>
    </location>
</feature>
<feature type="lipid moiety-binding region" description="N-myristoyl glycine" evidence="2">
    <location>
        <position position="2"/>
    </location>
</feature>
<sequence length="200" mass="23416">MGNLFGRKKQSRVTEQDRAILQLKQQRDKLRQYQKRVTQQLERERALARQLLRDGRKERAKLLLKKKRYREQLLDRTENQISSLEAMVQSIEFTQIEMKVMEGLQVGNECLNKMHQVMSIEEVERILDETQEAVEYQRQIDELLAGNFTQEDEDAILEELNAITQEQMELPEVPSEPLPDRNPEAPAKARSRQAELVAAS</sequence>
<protein>
    <recommendedName>
        <fullName>Charged multivesicular body protein 6</fullName>
    </recommendedName>
    <alternativeName>
        <fullName>Chromatin-modifying protein 6</fullName>
    </alternativeName>
</protein>
<gene>
    <name type="primary">Chmp6</name>
</gene>
<evidence type="ECO:0000250" key="1"/>
<evidence type="ECO:0000250" key="2">
    <source>
        <dbReference type="UniProtKB" id="Q96FZ7"/>
    </source>
</evidence>
<evidence type="ECO:0000255" key="3"/>
<evidence type="ECO:0000256" key="4">
    <source>
        <dbReference type="SAM" id="MobiDB-lite"/>
    </source>
</evidence>
<evidence type="ECO:0000305" key="5"/>
<evidence type="ECO:0007744" key="6">
    <source>
    </source>
</evidence>
<organism>
    <name type="scientific">Mus musculus</name>
    <name type="common">Mouse</name>
    <dbReference type="NCBI Taxonomy" id="10090"/>
    <lineage>
        <taxon>Eukaryota</taxon>
        <taxon>Metazoa</taxon>
        <taxon>Chordata</taxon>
        <taxon>Craniata</taxon>
        <taxon>Vertebrata</taxon>
        <taxon>Euteleostomi</taxon>
        <taxon>Mammalia</taxon>
        <taxon>Eutheria</taxon>
        <taxon>Euarchontoglires</taxon>
        <taxon>Glires</taxon>
        <taxon>Rodentia</taxon>
        <taxon>Myomorpha</taxon>
        <taxon>Muroidea</taxon>
        <taxon>Muridae</taxon>
        <taxon>Murinae</taxon>
        <taxon>Mus</taxon>
        <taxon>Mus</taxon>
    </lineage>
</organism>
<comment type="function">
    <text evidence="1">Probable core component of the endosomal sorting required for transport complex III (ESCRT-III) which is involved in multivesicular bodies (MVBs) formation and sorting of endosomal cargo proteins into MVBs. MVBs contain intraluminal vesicles (ILVs) that are generated by invagination and scission from the limiting membrane of the endosome and mostly are delivered to lysosomes enabling degradation of membrane proteins, such as stimulated growth factor receptors, lysosomal enzymes and lipids. The MVB pathway appears to require the sequential function of ESCRT-O, -I,-II and -III complexes. ESCRT-III proteins mostly dissociate from the invaginating membrane before the ILV is released. The ESCRT machinery also functions in topologically equivalent membrane fission events, such as the terminal stages of cytokinesis. ESCRT-III proteins are believed to mediate the necessary vesicle extrusion and/or membrane fission activities, possibly in conjunction with the AAA ATPase VPS4. In the ESCRT-III complex, it probably serves as an acceptor for the ESCRT-II complex on endosomal membranes (By similarity).</text>
</comment>
<comment type="subunit">
    <text evidence="1">Probable core component of the endosomal sorting required for transport complex III (ESCRT-III). ESCRT-III components are thought to multimerize to form a flat lattice on the perimeter membrane of the endosome. Several assembly forms of ESCRT-III may exist that interact and act sequentially. Interacts with VPS4A; the interaction is direct. Interacts with VPS4B; the interaction is direct. Interacts with CHMP4A, CHMP4B and CHMP4C. Interacts with SNF8, VPS25 and VPS36 (By similarity).</text>
</comment>
<comment type="subcellular location">
    <subcellularLocation>
        <location evidence="1">Endomembrane system</location>
    </subcellularLocation>
    <subcellularLocation>
        <location evidence="1">Endosome membrane</location>
        <topology evidence="1">Lipid-anchor</topology>
    </subcellularLocation>
    <subcellularLocation>
        <location evidence="1">Late endosome membrane</location>
    </subcellularLocation>
    <subcellularLocation>
        <location evidence="2">Membrane</location>
        <topology evidence="2">Lipid-anchor</topology>
    </subcellularLocation>
    <text evidence="1">Localizes to endosomal membranes.</text>
</comment>
<comment type="domain">
    <text evidence="1">The acidic C-terminus and the basic N-termminus are thought to render the protein in a closed, soluble and inactive conformation through an autoinhibitory intramolecular interaction. The open and active conformation, which enables membrane binding and oligomerization, is achieved by interaction with other cellular binding partners, probably including other ESCRT components (By similarity).</text>
</comment>
<comment type="PTM">
    <text evidence="1">ISGylated in a CHMP5-dependent manner. Isgylation weakens its interaction with VPS4A (By similarity).</text>
</comment>
<comment type="similarity">
    <text evidence="5">Belongs to the SNF7 family.</text>
</comment>
<proteinExistence type="evidence at protein level"/>